<evidence type="ECO:0000269" key="1">
    <source>
    </source>
</evidence>
<evidence type="ECO:0000269" key="2">
    <source>
    </source>
</evidence>
<evidence type="ECO:0000269" key="3">
    <source>
    </source>
</evidence>
<evidence type="ECO:0000269" key="4">
    <source>
    </source>
</evidence>
<evidence type="ECO:0000269" key="5">
    <source>
    </source>
</evidence>
<evidence type="ECO:0000269" key="6">
    <source>
    </source>
</evidence>
<evidence type="ECO:0000269" key="7">
    <source>
    </source>
</evidence>
<evidence type="ECO:0000269" key="8">
    <source>
    </source>
</evidence>
<evidence type="ECO:0000269" key="9">
    <source>
    </source>
</evidence>
<evidence type="ECO:0000269" key="10">
    <source>
    </source>
</evidence>
<evidence type="ECO:0000269" key="11">
    <source>
    </source>
</evidence>
<evidence type="ECO:0000269" key="12">
    <source>
    </source>
</evidence>
<evidence type="ECO:0000269" key="13">
    <source>
    </source>
</evidence>
<evidence type="ECO:0000269" key="14">
    <source>
    </source>
</evidence>
<evidence type="ECO:0000269" key="15">
    <source>
    </source>
</evidence>
<evidence type="ECO:0000269" key="16">
    <source>
    </source>
</evidence>
<evidence type="ECO:0000269" key="17">
    <source>
    </source>
</evidence>
<evidence type="ECO:0000269" key="18">
    <source>
    </source>
</evidence>
<evidence type="ECO:0000269" key="19">
    <source>
    </source>
</evidence>
<evidence type="ECO:0000269" key="20">
    <source>
    </source>
</evidence>
<evidence type="ECO:0000269" key="21">
    <source>
    </source>
</evidence>
<evidence type="ECO:0000269" key="22">
    <source>
    </source>
</evidence>
<evidence type="ECO:0000269" key="23">
    <source>
    </source>
</evidence>
<evidence type="ECO:0000269" key="24">
    <source>
    </source>
</evidence>
<evidence type="ECO:0000303" key="25">
    <source ref="4"/>
</evidence>
<evidence type="ECO:0000305" key="26"/>
<evidence type="ECO:0000305" key="27">
    <source>
    </source>
</evidence>
<evidence type="ECO:0007744" key="28">
    <source>
    </source>
</evidence>
<evidence type="ECO:0007829" key="29">
    <source>
        <dbReference type="PDB" id="3EDY"/>
    </source>
</evidence>
<evidence type="ECO:0007829" key="30">
    <source>
        <dbReference type="PDB" id="3EE6"/>
    </source>
</evidence>
<comment type="function">
    <text evidence="3 15 16">Lysosomal serine protease with tripeptidyl-peptidase I activity (PubMed:11054422, PubMed:19038966, PubMed:19038967). May act as a non-specific lysosomal peptidase which generates tripeptides from the breakdown products produced by lysosomal proteinases (PubMed:11054422, PubMed:19038966, PubMed:19038967). Requires substrates with an unsubstituted N-terminus (PubMed:19038966).</text>
</comment>
<comment type="catalytic activity">
    <reaction evidence="3 15 16">
        <text>Release of an N-terminal tripeptide from a polypeptide, but also has endopeptidase activity.</text>
        <dbReference type="EC" id="3.4.14.9"/>
    </reaction>
</comment>
<comment type="cofactor">
    <cofactor evidence="15 16">
        <name>Ca(2+)</name>
        <dbReference type="ChEBI" id="CHEBI:29108"/>
    </cofactor>
    <text evidence="15 16">Binds 1 Ca(2+) ion per subunit.</text>
</comment>
<comment type="activity regulation">
    <text evidence="3">Inhibited by diisopropyl fluorophosphate (DFP).</text>
</comment>
<comment type="subunit">
    <text evidence="14 16 19">Monomer (PubMed:19038967). Interacts with CLN5 (PubMed:19941651). Interacts with CLN3 (PubMed:17237713).</text>
</comment>
<comment type="interaction">
    <interactant intactId="EBI-2800203">
        <id>O14773</id>
    </interactant>
    <interactant intactId="EBI-25838672">
        <id>Q9NWX5-2</id>
        <label>ASB6</label>
    </interactant>
    <organismsDiffer>false</organismsDiffer>
    <experiments>3</experiments>
</comment>
<comment type="interaction">
    <interactant intactId="EBI-2800203">
        <id>O14773</id>
    </interactant>
    <interactant intactId="EBI-747776">
        <id>Q53EZ4</id>
        <label>CEP55</label>
    </interactant>
    <organismsDiffer>false</organismsDiffer>
    <experiments>3</experiments>
</comment>
<comment type="interaction">
    <interactant intactId="EBI-2800203">
        <id>O14773</id>
    </interactant>
    <interactant intactId="EBI-617866">
        <id>Q9NSE2</id>
        <label>CISH</label>
    </interactant>
    <organismsDiffer>false</organismsDiffer>
    <experiments>3</experiments>
</comment>
<comment type="interaction">
    <interactant intactId="EBI-2800203">
        <id>O14773</id>
    </interactant>
    <interactant intactId="EBI-2869903">
        <id>Q9UKA2</id>
        <label>FBXL4</label>
    </interactant>
    <organismsDiffer>false</organismsDiffer>
    <experiments>3</experiments>
</comment>
<comment type="interaction">
    <interactant intactId="EBI-2800203">
        <id>O14773</id>
    </interactant>
    <interactant intactId="EBI-2506081">
        <id>Q6P3S6</id>
        <label>FBXO42</label>
    </interactant>
    <organismsDiffer>false</organismsDiffer>
    <experiments>3</experiments>
</comment>
<comment type="interaction">
    <interactant intactId="EBI-2800203">
        <id>O14773</id>
    </interactant>
    <interactant intactId="EBI-1058491">
        <id>Q96FW1</id>
        <label>OTUB1</label>
    </interactant>
    <organismsDiffer>false</organismsDiffer>
    <experiments>3</experiments>
</comment>
<comment type="interaction">
    <interactant intactId="EBI-2800203">
        <id>O14773</id>
    </interactant>
    <interactant intactId="EBI-743938">
        <id>Q96D59</id>
        <label>RNF183</label>
    </interactant>
    <organismsDiffer>false</organismsDiffer>
    <experiments>3</experiments>
</comment>
<comment type="interaction">
    <interactant intactId="EBI-2800203">
        <id>O14773</id>
    </interactant>
    <interactant intactId="EBI-3650647">
        <id>Q9BUZ4</id>
        <label>TRAF4</label>
    </interactant>
    <organismsDiffer>false</organismsDiffer>
    <experiments>3</experiments>
</comment>
<comment type="interaction">
    <interactant intactId="EBI-2800203">
        <id>O14773</id>
    </interactant>
    <interactant intactId="EBI-12072186">
        <id>P45974-2</id>
        <label>USP5</label>
    </interactant>
    <organismsDiffer>false</organismsDiffer>
    <experiments>3</experiments>
</comment>
<comment type="interaction">
    <interactant intactId="EBI-2800203">
        <id>O14773</id>
    </interactant>
    <interactant intactId="EBI-743923">
        <id>O00308</id>
        <label>WWP2</label>
    </interactant>
    <organismsDiffer>false</organismsDiffer>
    <experiments>3</experiments>
</comment>
<comment type="interaction">
    <interactant intactId="EBI-2800203">
        <id>O14773</id>
    </interactant>
    <interactant intactId="EBI-5235984">
        <id>Q8NAP3</id>
        <label>ZBTB38</label>
    </interactant>
    <organismsDiffer>false</organismsDiffer>
    <experiments>3</experiments>
</comment>
<comment type="interaction">
    <interactant intactId="EBI-2800203">
        <id>O14773</id>
    </interactant>
    <interactant intactId="EBI-14033503">
        <id>E5LBV4</id>
        <label>ORF31</label>
    </interactant>
    <organismsDiffer>true</organismsDiffer>
    <experiments>2</experiments>
</comment>
<comment type="interaction">
    <interactant intactId="EBI-15619703">
        <id>O14773-1</id>
    </interactant>
    <interactant intactId="EBI-15994382">
        <id>Q2NKJ3-1</id>
        <label>CTC1</label>
    </interactant>
    <organismsDiffer>false</organismsDiffer>
    <experiments>3</experiments>
</comment>
<comment type="interaction">
    <interactant intactId="EBI-15619703">
        <id>O14773-1</id>
    </interactant>
    <interactant intactId="EBI-746930">
        <id>Q9H668</id>
        <label>STN1</label>
    </interactant>
    <organismsDiffer>false</organismsDiffer>
    <experiments>2</experiments>
</comment>
<comment type="interaction">
    <interactant intactId="EBI-15619703">
        <id>O14773-1</id>
    </interactant>
    <interactant intactId="EBI-1772203">
        <id>O14746</id>
        <label>TERT</label>
    </interactant>
    <organismsDiffer>false</organismsDiffer>
    <experiments>2</experiments>
</comment>
<comment type="subcellular location">
    <subcellularLocation>
        <location evidence="19">Lysosome</location>
    </subcellularLocation>
    <subcellularLocation>
        <location evidence="10">Melanosome</location>
    </subcellularLocation>
    <text evidence="10">Identified by mass spectrometry in melanosome fractions from stage I to stage IV.</text>
</comment>
<comment type="alternative products">
    <event type="alternative splicing"/>
    <isoform>
        <id>O14773-1</id>
        <name>1</name>
        <sequence type="displayed"/>
    </isoform>
    <isoform>
        <id>O14773-2</id>
        <name>2</name>
        <sequence type="described" ref="VSP_013118"/>
    </isoform>
</comment>
<comment type="tissue specificity">
    <text>Detected in all tissues examined with highest levels in heart and placenta and relatively similar levels in other tissues.</text>
</comment>
<comment type="PTM">
    <text evidence="3 15 16">Activated by autocatalytic proteolytical processing upon acidification (PubMed:11054422, PubMed:19038966, PubMed:19038967). N-glycosylation is required for processing and activity (PubMed:19038966, PubMed:19038967).</text>
</comment>
<comment type="disease" evidence="1 2 4 5 7 8 9 11 13 18 20 21 22 24">
    <disease id="DI-00811">
        <name>Ceroid lipofuscinosis, neuronal, 2</name>
        <acronym>CLN2</acronym>
        <description>A form of neuronal ceroid lipofuscinosis. Neuronal ceroid lipofuscinoses are progressive neurodegenerative, lysosomal storage diseases characterized by intracellular accumulation of autofluorescent liposomal material, and clinically by seizures, dementia, visual loss, and/or cerebral atrophy. The lipopigment pattern seen most often in CLN2 consists of curvilinear profiles.</description>
        <dbReference type="MIM" id="204500"/>
    </disease>
    <text>The disease is caused by variants affecting the gene represented in this entry.</text>
</comment>
<comment type="disease" evidence="23">
    <disease id="DI-03994">
        <name>Spinocerebellar ataxia, autosomal recessive, 7</name>
        <acronym>SCAR7</acronym>
        <description>A form of spinocerebellar ataxia, a clinically and genetically heterogeneous group of cerebellar disorders. Patients show progressive incoordination of gait and often poor coordination of hands, speech and eye movements, due to degeneration of the cerebellum with variable involvement of the brainstem and spinal cord. SCAR7 patients show difficulty walking and writing, dysarthria, limb ataxia, and cerebellar atrophy.</description>
        <dbReference type="MIM" id="609270"/>
    </disease>
    <text>The disease is caused by variants affecting the gene represented in this entry.</text>
</comment>
<comment type="sequence caution" evidence="26">
    <conflict type="miscellaneous discrepancy">
        <sequence resource="EMBL-CDS" id="AAM08412"/>
    </conflict>
    <text>Incorrectly indicated as originating from bovine.</text>
</comment>
<comment type="sequence caution" evidence="26">
    <conflict type="frameshift">
        <sequence resource="EMBL-CDS" id="AAQ88866"/>
    </conflict>
</comment>
<comment type="online information" name="NCL CLN2">
    <link uri="https://www.ucl.ac.uk/ncl-disease/ncl-resource-gateway-batten-disease"/>
    <text>Neural Ceroid Lipofuscinoses mutation db</text>
</comment>
<comment type="online information" name="Mendelian genes trieptidyl peptidase I (TPP1)">
    <link uri="https://databases.lovd.nl/shared/genes/TPP1"/>
    <text>Leiden Open Variation Database (LOVD)</text>
</comment>
<sequence>MGLQACLLGLFALILSGKCSYSPEPDQRRTLPPGWVSLGRADPEEELSLTFALRQQNVERLSELVQAVSDPSSPQYGKYLTLENVADLVRPSPLTLHTVQKWLLAAGAQKCHSVITQDFLTCWLSIRQAELLLPGAEFHHYVGGPTETHVVRSPHPYQLPQALAPHVDFVGGLHRFPPTSSLRQRPEPQVTGTVGLHLGVTPSVIRKRYNLTSQDVGSGTSNNSQACAQFLEQYFHDSDLAQFMRLFGGNFAHQASVARVVGQQGRGRAGIEASLDVQYLMSAGANISTWVYSSPGRHEGQEPFLQWLMLLSNESALPHVHTVSYGDDEDSLSSAYIQRVNTELMKAAARGLTLLFASGDSGAGCWSVSGRHQFRPTFPASSPYVTTVGGTSFQEPFLITNEIVDYISGGGFSNVFPRPSYQEEAVTKFLSSSPHLPPSSYFNASGRAYPDVAALSDGYWVVSNRVPIPWVSGTSASTPVFGGILSLINEHRILSGRPPLGFLNPRLYQQHGAGLFDVTRGCHESCLDEEVEGQGFCSGPGWDPVTGWGTPNFPALLKTLLNP</sequence>
<keyword id="KW-0002">3D-structure</keyword>
<keyword id="KW-0025">Alternative splicing</keyword>
<keyword id="KW-0068">Autocatalytic cleavage</keyword>
<keyword id="KW-0106">Calcium</keyword>
<keyword id="KW-0903">Direct protein sequencing</keyword>
<keyword id="KW-0225">Disease variant</keyword>
<keyword id="KW-1015">Disulfide bond</keyword>
<keyword id="KW-0887">Epilepsy</keyword>
<keyword id="KW-0325">Glycoprotein</keyword>
<keyword id="KW-0378">Hydrolase</keyword>
<keyword id="KW-0458">Lysosome</keyword>
<keyword id="KW-0479">Metal-binding</keyword>
<keyword id="KW-0523">Neurodegeneration</keyword>
<keyword id="KW-0525">Neuronal ceroid lipofuscinosis</keyword>
<keyword id="KW-0645">Protease</keyword>
<keyword id="KW-1267">Proteomics identification</keyword>
<keyword id="KW-1185">Reference proteome</keyword>
<keyword id="KW-0720">Serine protease</keyword>
<keyword id="KW-0732">Signal</keyword>
<keyword id="KW-0950">Spinocerebellar ataxia</keyword>
<keyword id="KW-0865">Zymogen</keyword>
<gene>
    <name type="primary">TPP1</name>
    <name type="synonym">CLN2</name>
    <name type="ORF">GIG1</name>
    <name type="ORF">UNQ267/PRO304</name>
</gene>
<organism>
    <name type="scientific">Homo sapiens</name>
    <name type="common">Human</name>
    <dbReference type="NCBI Taxonomy" id="9606"/>
    <lineage>
        <taxon>Eukaryota</taxon>
        <taxon>Metazoa</taxon>
        <taxon>Chordata</taxon>
        <taxon>Craniata</taxon>
        <taxon>Vertebrata</taxon>
        <taxon>Euteleostomi</taxon>
        <taxon>Mammalia</taxon>
        <taxon>Eutheria</taxon>
        <taxon>Euarchontoglires</taxon>
        <taxon>Primates</taxon>
        <taxon>Haplorrhini</taxon>
        <taxon>Catarrhini</taxon>
        <taxon>Hominidae</taxon>
        <taxon>Homo</taxon>
    </lineage>
</organism>
<protein>
    <recommendedName>
        <fullName>Tripeptidyl-peptidase 1</fullName>
        <shortName>TPP-1</shortName>
        <ecNumber evidence="3 15 16">3.4.14.9</ecNumber>
    </recommendedName>
    <alternativeName>
        <fullName>Cell growth-inhibiting gene 1 protein</fullName>
    </alternativeName>
    <alternativeName>
        <fullName>Lysosomal pepstatin-insensitive protease</fullName>
        <shortName>LPIC</shortName>
    </alternativeName>
    <alternativeName>
        <fullName>Tripeptidyl aminopeptidase</fullName>
    </alternativeName>
    <alternativeName>
        <fullName>Tripeptidyl-peptidase I</fullName>
        <shortName>TPP-I</shortName>
    </alternativeName>
</protein>
<accession>O14773</accession>
<accession>Q53HT1</accession>
<accession>Q5JAK6</accession>
<accession>Q6UX56</accession>
<accession>Q71JP6</accession>
<accession>Q96C37</accession>
<feature type="signal peptide" evidence="3">
    <location>
        <begin position="1"/>
        <end position="19"/>
    </location>
</feature>
<feature type="propeptide" id="PRO_0000027374" description="Removed in mature form" evidence="3 28">
    <location>
        <begin position="20"/>
        <end position="195"/>
    </location>
</feature>
<feature type="chain" id="PRO_0000027375" description="Tripeptidyl-peptidase 1">
    <location>
        <begin position="196"/>
        <end position="563"/>
    </location>
</feature>
<feature type="domain" description="Peptidase S53">
    <location>
        <begin position="199"/>
        <end position="563"/>
    </location>
</feature>
<feature type="active site" description="Charge relay system" evidence="15 16">
    <location>
        <position position="272"/>
    </location>
</feature>
<feature type="active site" description="Charge relay system" evidence="15 16">
    <location>
        <position position="276"/>
    </location>
</feature>
<feature type="active site" description="Charge relay system" evidence="15 16 27">
    <location>
        <position position="475"/>
    </location>
</feature>
<feature type="binding site" evidence="15 16">
    <location>
        <position position="517"/>
    </location>
    <ligand>
        <name>Ca(2+)</name>
        <dbReference type="ChEBI" id="CHEBI:29108"/>
    </ligand>
</feature>
<feature type="binding site" evidence="15 16">
    <location>
        <position position="518"/>
    </location>
    <ligand>
        <name>Ca(2+)</name>
        <dbReference type="ChEBI" id="CHEBI:29108"/>
    </ligand>
</feature>
<feature type="binding site" evidence="15 16">
    <location>
        <position position="539"/>
    </location>
    <ligand>
        <name>Ca(2+)</name>
        <dbReference type="ChEBI" id="CHEBI:29108"/>
    </ligand>
</feature>
<feature type="binding site" evidence="15 16">
    <location>
        <position position="541"/>
    </location>
    <ligand>
        <name>Ca(2+)</name>
        <dbReference type="ChEBI" id="CHEBI:29108"/>
    </ligand>
</feature>
<feature type="binding site" evidence="15 16">
    <location>
        <position position="543"/>
    </location>
    <ligand>
        <name>Ca(2+)</name>
        <dbReference type="ChEBI" id="CHEBI:29108"/>
    </ligand>
</feature>
<feature type="glycosylation site" description="N-linked (GlcNAc...) asparagine" evidence="15 16 17">
    <location>
        <position position="210"/>
    </location>
</feature>
<feature type="glycosylation site" description="N-linked (GlcNAc...) asparagine" evidence="17">
    <location>
        <position position="222"/>
    </location>
</feature>
<feature type="glycosylation site" description="N-linked (GlcNAc...) asparagine" evidence="15 16">
    <location>
        <position position="286"/>
    </location>
</feature>
<feature type="glycosylation site" description="N-linked (GlcNAc...) asparagine" evidence="15 16 17">
    <location>
        <position position="313"/>
    </location>
</feature>
<feature type="glycosylation site" description="N-linked (GlcNAc...) asparagine" evidence="12 15 16 17">
    <location>
        <position position="443"/>
    </location>
</feature>
<feature type="disulfide bond" evidence="15 16">
    <location>
        <begin position="111"/>
        <end position="122"/>
    </location>
</feature>
<feature type="disulfide bond" evidence="15 16">
    <location>
        <begin position="365"/>
        <end position="526"/>
    </location>
</feature>
<feature type="disulfide bond" evidence="15 16">
    <location>
        <begin position="522"/>
        <end position="537"/>
    </location>
</feature>
<feature type="splice variant" id="VSP_013118" description="In isoform 2." evidence="25">
    <location>
        <begin position="1"/>
        <end position="243"/>
    </location>
</feature>
<feature type="sequence variant" id="VAR_037572" description="In dbSNP:rs2734715.">
    <original>S</original>
    <variation>L</variation>
    <location>
        <position position="62"/>
    </location>
</feature>
<feature type="sequence variant" id="VAR_066883" description="In CLN2." evidence="21">
    <original>S</original>
    <variation>T</variation>
    <location>
        <position position="62"/>
    </location>
</feature>
<feature type="sequence variant" id="VAR_009603" description="In CLN2; displays very low residual enzyme activity; altered intracellular trafficking; dbSNP:rs121908195." evidence="1 20">
    <original>G</original>
    <variation>R</variation>
    <location>
        <position position="77"/>
    </location>
</feature>
<feature type="sequence variant" id="VAR_009604" description="In dbSNP:rs1800746." evidence="1 6">
    <original>Q</original>
    <variation>R</variation>
    <location>
        <position position="100"/>
    </location>
</feature>
<feature type="sequence variant" id="VAR_016790" description="In CLN2; displays residual enzyme activity; effectively transported to the lysosome; dbSNP:rs121908204." evidence="5 8 20">
    <original>R</original>
    <variation>Q</variation>
    <location>
        <position position="127"/>
    </location>
</feature>
<feature type="sequence variant" id="VAR_016791" description="In CLN2; dbSNP:rs1554902028.">
    <original>S</original>
    <variation>P</variation>
    <location>
        <position position="153"/>
    </location>
</feature>
<feature type="sequence variant" id="VAR_005642" description="In dbSNP:rs764922748." evidence="24">
    <original>R</original>
    <variation>H</variation>
    <location>
        <position position="175"/>
    </location>
</feature>
<feature type="sequence variant" id="VAR_037573" description="In dbSNP:rs34758634.">
    <original>R</original>
    <variation>C</variation>
    <location>
        <position position="185"/>
    </location>
</feature>
<feature type="sequence variant" id="VAR_063640" description="In CLN2; displays no residual enzyme activity; altered intracellular trafficking; dbSNP:rs121908205." evidence="7 20">
    <original>P</original>
    <variation>L</variation>
    <location>
        <position position="202"/>
    </location>
</feature>
<feature type="sequence variant" id="VAR_009605" description="In CLN2; displays no residual enzyme activity; altered intracellular trafficking; dbSNP:rs28940573." evidence="2 20">
    <original>R</original>
    <variation>C</variation>
    <location>
        <position position="206"/>
    </location>
</feature>
<feature type="sequence variant" id="VAR_016792" description="In CLN2; dbSNP:rs121908209." evidence="11">
    <original>R</original>
    <variation>H</variation>
    <location>
        <position position="206"/>
    </location>
</feature>
<feature type="sequence variant" id="VAR_066884" description="In CLN2; dbSNP:rs1218678626." evidence="21">
    <original>Y</original>
    <variation>H</variation>
    <location>
        <position position="209"/>
    </location>
</feature>
<feature type="sequence variant" id="VAR_066885" description="In CLN2; dbSNP:rs757953998." evidence="21">
    <original>R</original>
    <variation>Q</variation>
    <location>
        <position position="266"/>
    </location>
</feature>
<feature type="sequence variant" id="VAR_016793" description="In CLN2; displays no residual enzyme activity; altered intracellular trafficking; demonstrates enhanced processing in response to folding improvement treatment; dbSNP:rs121908207." evidence="9 20">
    <original>V</original>
    <variation>M</variation>
    <location>
        <position position="277"/>
    </location>
</feature>
<feature type="sequence variant" id="VAR_016794" description="In CLN2; dbSNP:rs796053439." evidence="9">
    <original>Q</original>
    <variation>P</variation>
    <location>
        <position position="278"/>
    </location>
</feature>
<feature type="sequence variant" id="VAR_072749" description="In CLN2; dbSNP:rs796053439." evidence="22">
    <original>Q</original>
    <variation>R</variation>
    <location>
        <position position="278"/>
    </location>
</feature>
<feature type="sequence variant" id="VAR_016795" description="In CLN2; displays no residual enzyme activity; altered intracellular trafficking; dbSNP:rs119455957." evidence="5 9 20">
    <original>G</original>
    <variation>V</variation>
    <location>
        <position position="284"/>
    </location>
</feature>
<feature type="sequence variant" id="VAR_016796" description="In CLN2; enzymatically inactive; lacks one oligosaccharide chain resulting in enzymatic inactivation and possibly prelysosomal protein degradation; altered intracellular trafficking; dbSNP:rs119455958." evidence="8 13 20">
    <original>N</original>
    <variation>S</variation>
    <location>
        <position position="286"/>
    </location>
</feature>
<feature type="sequence variant" id="VAR_009606" description="In CLN2; displays no residual enzyme activity; altered intracellular trafficking; dbSNP:rs121908196." evidence="1 20">
    <original>I</original>
    <variation>N</variation>
    <location>
        <position position="287"/>
    </location>
</feature>
<feature type="sequence variant" id="VAR_066886" description="In CLN2; dbSNP:rs765380155." evidence="21">
    <original>R</original>
    <variation>Q</variation>
    <location>
        <position position="339"/>
    </location>
</feature>
<feature type="sequence variant" id="VAR_009607" description="In CLN2; displays no residual enzyme activity; altered intracellular trafficking; dbSNP:rs121908197." evidence="1 20">
    <original>E</original>
    <variation>K</variation>
    <location>
        <position position="343"/>
    </location>
</feature>
<feature type="sequence variant" id="VAR_016797" description="In CLN2; dbSNP:rs121908206." evidence="8">
    <original>T</original>
    <variation>P</variation>
    <location>
        <position position="353"/>
    </location>
</feature>
<feature type="sequence variant" id="VAR_005643" description="In CLN2; displays no residual enzyme activity; altered intracellular trafficking; dbSNP:rs119455953." evidence="1 20 24">
    <original>C</original>
    <variation>R</variation>
    <location>
        <position position="365"/>
    </location>
</feature>
<feature type="sequence variant" id="VAR_005644" description="In CLN2; dbSNP:rs119455954." evidence="1 24">
    <original>C</original>
    <variation>Y</variation>
    <location>
        <position position="365"/>
    </location>
</feature>
<feature type="sequence variant" id="VAR_066887" description="In CLN2." evidence="21">
    <original>S</original>
    <variation>R</variation>
    <location>
        <position position="382"/>
    </location>
</feature>
<feature type="sequence variant" id="VAR_009608" description="In CLN2; dbSNP:rs121908198." evidence="1">
    <original>V</original>
    <variation>D</variation>
    <location>
        <position position="385"/>
    </location>
</feature>
<feature type="sequence variant" id="VAR_009609" description="In CLN2; dbSNP:rs121908199." evidence="1 6">
    <original>G</original>
    <variation>E</variation>
    <location>
        <position position="389"/>
    </location>
</feature>
<feature type="sequence variant" id="VAR_009610" description="In CLN2; displays no residual enzyme activity; altered intracellular trafficking;; dbSNP:rs121908200." evidence="1 20 22">
    <original>Q</original>
    <variation>H</variation>
    <location>
        <position position="422"/>
    </location>
</feature>
<feature type="sequence variant" id="VAR_016798" description="In CLN2; dbSNP:rs1855562536." evidence="5">
    <original>K</original>
    <variation>N</variation>
    <location>
        <position position="428"/>
    </location>
</feature>
<feature type="sequence variant" id="VAR_005645" description="In CLN2; displays very low residual enzyme activity; altered intracellular trafficking; demonstrates enhanced processing in response to folding improvement treatment; shows a five fold increase under permissive temperature conditions; dbSNP:rs119455956." evidence="1 6 20">
    <original>R</original>
    <variation>H</variation>
    <location>
        <position position="447"/>
    </location>
</feature>
<feature type="sequence variant" id="VAR_066888" description="In CLN2." evidence="21">
    <original>A</original>
    <variation>V</variation>
    <location>
        <position position="448"/>
    </location>
</feature>
<feature type="sequence variant" id="VAR_009611" description="In CLN2; dbSNP:rs121908201." evidence="1">
    <original>A</original>
    <variation>E</variation>
    <location>
        <position position="454"/>
    </location>
</feature>
<feature type="sequence variant" id="VAR_070917" description="In SCAR7; dbSNP:rs398122959." evidence="23">
    <original>V</original>
    <variation>G</variation>
    <location>
        <position position="466"/>
    </location>
</feature>
<feature type="sequence variant" id="VAR_016799" description="In CLN2; dbSNP:rs121908203." evidence="4 5">
    <original>G</original>
    <variation>R</variation>
    <location>
        <position position="473"/>
    </location>
</feature>
<feature type="sequence variant" id="VAR_009612" description="In CLN2; displays no residual enzyme activity; effectively transported to the lysosome; dbSNP:rs121908202." evidence="1 20">
    <original>S</original>
    <variation>L</variation>
    <location>
        <position position="475"/>
    </location>
</feature>
<feature type="sequence variant" id="VAR_016800" description="In CLN2." evidence="9">
    <original>F</original>
    <variation>C</variation>
    <location>
        <position position="481"/>
    </location>
</feature>
<feature type="sequence variant" id="VAR_058435" description="In CLN2; dbSNP:rs121908208." evidence="18">
    <original>G</original>
    <variation>R</variation>
    <location>
        <position position="482"/>
    </location>
</feature>
<feature type="sequence variant" id="VAR_066889" description="In CLN2." evidence="21">
    <original>G</original>
    <variation>C</variation>
    <location>
        <position position="501"/>
    </location>
</feature>
<feature type="sequence variant" id="VAR_066890" description="In CLN2." evidence="21">
    <original>N</original>
    <variation>Y</variation>
    <location>
        <position position="504"/>
    </location>
</feature>
<feature type="sequence variant" id="VAR_063641" description="In CLN2; displays residual enzyme activity; effectively transported to the lysosome; dbSNP:rs121908210." evidence="20">
    <original>P</original>
    <variation>S</variation>
    <location>
        <position position="544"/>
    </location>
</feature>
<feature type="sequence variant" id="VAR_066891" description="In CLN2; dbSNP:rs1348967263." evidence="21">
    <original>W</original>
    <variation>R</variation>
    <location>
        <position position="548"/>
    </location>
</feature>
<feature type="mutagenesis site" description="No effect." evidence="3">
    <original>H</original>
    <variation>A</variation>
    <location>
        <position position="236"/>
    </location>
</feature>
<feature type="mutagenesis site" description="Inactive. Impaired processing." evidence="3">
    <original>D</original>
    <variation>A</variation>
    <location>
        <position position="360"/>
    </location>
</feature>
<feature type="mutagenesis site" description="Inactive. Impaired processing." evidence="3">
    <original>S</original>
    <variation>A</variation>
    <location>
        <position position="475"/>
    </location>
</feature>
<feature type="mutagenesis site" description="Inactive. Impaired processing." evidence="3">
    <original>D</original>
    <variation>A</variation>
    <location>
        <position position="517"/>
    </location>
</feature>
<feature type="sequence conflict" description="In Ref. 6; BAD96219." evidence="26" ref="6">
    <original>I</original>
    <variation>N</variation>
    <location>
        <position position="115"/>
    </location>
</feature>
<feature type="sequence conflict" description="In Ref. 7; AAH14863." evidence="26" ref="7">
    <original>Q</original>
    <variation>E</variation>
    <location>
        <position position="373"/>
    </location>
</feature>
<feature type="strand" evidence="29">
    <location>
        <begin position="35"/>
        <end position="40"/>
    </location>
</feature>
<feature type="strand" evidence="29">
    <location>
        <begin position="46"/>
        <end position="53"/>
    </location>
</feature>
<feature type="helix" evidence="29">
    <location>
        <begin position="58"/>
        <end position="69"/>
    </location>
</feature>
<feature type="turn" evidence="29">
    <location>
        <begin position="74"/>
        <end position="77"/>
    </location>
</feature>
<feature type="helix" evidence="29">
    <location>
        <begin position="82"/>
        <end position="89"/>
    </location>
</feature>
<feature type="helix" evidence="29">
    <location>
        <begin position="93"/>
        <end position="106"/>
    </location>
</feature>
<feature type="strand" evidence="29">
    <location>
        <begin position="109"/>
        <end position="113"/>
    </location>
</feature>
<feature type="strand" evidence="29">
    <location>
        <begin position="119"/>
        <end position="125"/>
    </location>
</feature>
<feature type="helix" evidence="29">
    <location>
        <begin position="126"/>
        <end position="132"/>
    </location>
</feature>
<feature type="strand" evidence="29">
    <location>
        <begin position="139"/>
        <end position="143"/>
    </location>
</feature>
<feature type="turn" evidence="29">
    <location>
        <begin position="144"/>
        <end position="147"/>
    </location>
</feature>
<feature type="strand" evidence="29">
    <location>
        <begin position="148"/>
        <end position="152"/>
    </location>
</feature>
<feature type="helix" evidence="29">
    <location>
        <begin position="161"/>
        <end position="163"/>
    </location>
</feature>
<feature type="turn" evidence="29">
    <location>
        <begin position="164"/>
        <end position="166"/>
    </location>
</feature>
<feature type="strand" evidence="29">
    <location>
        <begin position="167"/>
        <end position="170"/>
    </location>
</feature>
<feature type="helix" evidence="29">
    <location>
        <begin position="202"/>
        <end position="208"/>
    </location>
</feature>
<feature type="strand" evidence="29">
    <location>
        <begin position="219"/>
        <end position="221"/>
    </location>
</feature>
<feature type="strand" evidence="29">
    <location>
        <begin position="224"/>
        <end position="229"/>
    </location>
</feature>
<feature type="helix" evidence="29">
    <location>
        <begin position="237"/>
        <end position="247"/>
    </location>
</feature>
<feature type="strand" evidence="29">
    <location>
        <begin position="258"/>
        <end position="262"/>
    </location>
</feature>
<feature type="helix" evidence="29">
    <location>
        <begin position="271"/>
        <end position="283"/>
    </location>
</feature>
<feature type="turn" evidence="30">
    <location>
        <begin position="284"/>
        <end position="286"/>
    </location>
</feature>
<feature type="strand" evidence="29">
    <location>
        <begin position="287"/>
        <end position="292"/>
    </location>
</feature>
<feature type="turn" evidence="30">
    <location>
        <begin position="295"/>
        <end position="300"/>
    </location>
</feature>
<feature type="helix" evidence="29">
    <location>
        <begin position="303"/>
        <end position="311"/>
    </location>
</feature>
<feature type="strand" evidence="29">
    <location>
        <begin position="319"/>
        <end position="324"/>
    </location>
</feature>
<feature type="helix" evidence="29">
    <location>
        <begin position="329"/>
        <end position="331"/>
    </location>
</feature>
<feature type="helix" evidence="29">
    <location>
        <begin position="334"/>
        <end position="349"/>
    </location>
</feature>
<feature type="strand" evidence="29">
    <location>
        <begin position="353"/>
        <end position="357"/>
    </location>
</feature>
<feature type="strand" evidence="29">
    <location>
        <begin position="366"/>
        <end position="368"/>
    </location>
</feature>
<feature type="strand" evidence="29">
    <location>
        <begin position="371"/>
        <end position="373"/>
    </location>
</feature>
<feature type="turn" evidence="29">
    <location>
        <begin position="379"/>
        <end position="381"/>
    </location>
</feature>
<feature type="strand" evidence="29">
    <location>
        <begin position="385"/>
        <end position="397"/>
    </location>
</feature>
<feature type="strand" evidence="29">
    <location>
        <begin position="402"/>
        <end position="404"/>
    </location>
</feature>
<feature type="strand" evidence="29">
    <location>
        <begin position="411"/>
        <end position="417"/>
    </location>
</feature>
<feature type="helix" evidence="29">
    <location>
        <begin position="420"/>
        <end position="422"/>
    </location>
</feature>
<feature type="helix" evidence="29">
    <location>
        <begin position="423"/>
        <end position="432"/>
    </location>
</feature>
<feature type="helix" evidence="29">
    <location>
        <begin position="439"/>
        <end position="441"/>
    </location>
</feature>
<feature type="strand" evidence="29">
    <location>
        <begin position="446"/>
        <end position="449"/>
    </location>
</feature>
<feature type="strand" evidence="29">
    <location>
        <begin position="451"/>
        <end position="455"/>
    </location>
</feature>
<feature type="strand" evidence="29">
    <location>
        <begin position="457"/>
        <end position="463"/>
    </location>
</feature>
<feature type="strand" evidence="29">
    <location>
        <begin position="466"/>
        <end position="471"/>
    </location>
</feature>
<feature type="helix" evidence="29">
    <location>
        <begin position="474"/>
        <end position="494"/>
    </location>
</feature>
<feature type="helix" evidence="29">
    <location>
        <begin position="504"/>
        <end position="509"/>
    </location>
</feature>
<feature type="turn" evidence="29">
    <location>
        <begin position="510"/>
        <end position="514"/>
    </location>
</feature>
<feature type="strand" evidence="29">
    <location>
        <begin position="522"/>
        <end position="525"/>
    </location>
</feature>
<feature type="turn" evidence="29">
    <location>
        <begin position="529"/>
        <end position="533"/>
    </location>
</feature>
<feature type="strand" evidence="29">
    <location>
        <begin position="534"/>
        <end position="537"/>
    </location>
</feature>
<feature type="turn" evidence="29">
    <location>
        <begin position="544"/>
        <end position="546"/>
    </location>
</feature>
<feature type="helix" evidence="29">
    <location>
        <begin position="553"/>
        <end position="558"/>
    </location>
</feature>
<name>TPP1_HUMAN</name>
<reference key="1">
    <citation type="journal article" date="1997" name="Science">
        <title>Association of mutations in a lysosomal protein with classical late-infantile neuronal ceroid lipofuscinosis.</title>
        <authorList>
            <person name="Sleat D.E."/>
            <person name="Donnelly R.J."/>
            <person name="Lackland H."/>
            <person name="Liu C.-G."/>
            <person name="Sohar I."/>
            <person name="Pullarkat R.K."/>
            <person name="Lobel P."/>
        </authorList>
    </citation>
    <scope>NUCLEOTIDE SEQUENCE [MRNA] (ISOFORM 1)</scope>
    <scope>PARTIAL PROTEIN SEQUENCE</scope>
    <scope>VARIANTS CLN2 ARG-365 AND TYR-365</scope>
    <scope>VARIANT HIS-175</scope>
    <source>
        <tissue>Placenta</tissue>
    </source>
</reference>
<reference key="2">
    <citation type="journal article" date="1998" name="Genomics">
        <title>Structural organization and sequence of CLN2, the defective gene in classical late infantile neuronal ceroid lipofuscinosis.</title>
        <authorList>
            <person name="Liu C.-G."/>
            <person name="Sleat D.E."/>
            <person name="Donnelly R.J."/>
            <person name="Lobel P."/>
        </authorList>
    </citation>
    <scope>NUCLEOTIDE SEQUENCE [GENOMIC DNA]</scope>
    <source>
        <tissue>Placenta</tissue>
    </source>
</reference>
<reference key="3">
    <citation type="submission" date="2002-03" db="EMBL/GenBank/DDBJ databases">
        <title>Bovine brain homolog of the tripeptidyl peptidase I which is deficient in the human classic late-infantile neuronal ceroid lipofuscinosis.</title>
        <authorList>
            <person name="Junaid M.A."/>
            <person name="Barua M."/>
            <person name="Pullarkat R.K."/>
        </authorList>
    </citation>
    <scope>NUCLEOTIDE SEQUENCE [MRNA] (ISOFORM 1)</scope>
    <source>
        <tissue>Brain cortex</tissue>
    </source>
</reference>
<reference key="4">
    <citation type="submission" date="2003-04" db="EMBL/GenBank/DDBJ databases">
        <title>Identification of a human growth inhibition gene 1 (GIG1).</title>
        <authorList>
            <person name="Kim J.W."/>
        </authorList>
    </citation>
    <scope>NUCLEOTIDE SEQUENCE [LARGE SCALE MRNA] (ISOFORM 2)</scope>
</reference>
<reference key="5">
    <citation type="journal article" date="2003" name="Genome Res.">
        <title>The secreted protein discovery initiative (SPDI), a large-scale effort to identify novel human secreted and transmembrane proteins: a bioinformatics assessment.</title>
        <authorList>
            <person name="Clark H.F."/>
            <person name="Gurney A.L."/>
            <person name="Abaya E."/>
            <person name="Baker K."/>
            <person name="Baldwin D.T."/>
            <person name="Brush J."/>
            <person name="Chen J."/>
            <person name="Chow B."/>
            <person name="Chui C."/>
            <person name="Crowley C."/>
            <person name="Currell B."/>
            <person name="Deuel B."/>
            <person name="Dowd P."/>
            <person name="Eaton D."/>
            <person name="Foster J.S."/>
            <person name="Grimaldi C."/>
            <person name="Gu Q."/>
            <person name="Hass P.E."/>
            <person name="Heldens S."/>
            <person name="Huang A."/>
            <person name="Kim H.S."/>
            <person name="Klimowski L."/>
            <person name="Jin Y."/>
            <person name="Johnson S."/>
            <person name="Lee J."/>
            <person name="Lewis L."/>
            <person name="Liao D."/>
            <person name="Mark M.R."/>
            <person name="Robbie E."/>
            <person name="Sanchez C."/>
            <person name="Schoenfeld J."/>
            <person name="Seshagiri S."/>
            <person name="Simmons L."/>
            <person name="Singh J."/>
            <person name="Smith V."/>
            <person name="Stinson J."/>
            <person name="Vagts A."/>
            <person name="Vandlen R.L."/>
            <person name="Watanabe C."/>
            <person name="Wieand D."/>
            <person name="Woods K."/>
            <person name="Xie M.-H."/>
            <person name="Yansura D.G."/>
            <person name="Yi S."/>
            <person name="Yu G."/>
            <person name="Yuan J."/>
            <person name="Zhang M."/>
            <person name="Zhang Z."/>
            <person name="Goddard A.D."/>
            <person name="Wood W.I."/>
            <person name="Godowski P.J."/>
            <person name="Gray A.M."/>
        </authorList>
    </citation>
    <scope>NUCLEOTIDE SEQUENCE [LARGE SCALE MRNA] (ISOFORM 1)</scope>
</reference>
<reference key="6">
    <citation type="submission" date="2005-04" db="EMBL/GenBank/DDBJ databases">
        <authorList>
            <person name="Suzuki Y."/>
            <person name="Sugano S."/>
            <person name="Totoki Y."/>
            <person name="Toyoda A."/>
            <person name="Takeda T."/>
            <person name="Sakaki Y."/>
            <person name="Tanaka A."/>
            <person name="Yokoyama S."/>
        </authorList>
    </citation>
    <scope>NUCLEOTIDE SEQUENCE [LARGE SCALE MRNA] (ISOFORM 1)</scope>
    <source>
        <tissue>Adipose tissue</tissue>
    </source>
</reference>
<reference key="7">
    <citation type="journal article" date="2004" name="Genome Res.">
        <title>The status, quality, and expansion of the NIH full-length cDNA project: the Mammalian Gene Collection (MGC).</title>
        <authorList>
            <consortium name="The MGC Project Team"/>
        </authorList>
    </citation>
    <scope>NUCLEOTIDE SEQUENCE [LARGE SCALE MRNA] (ISOFORM 1)</scope>
    <source>
        <tissue>Lymph</tissue>
    </source>
</reference>
<reference key="8">
    <citation type="journal article" date="2001" name="J. Biol. Chem.">
        <title>The human CLN2 protein/tripeptidyl-peptidase I is a serine protease that autoactivates at acidic pH.</title>
        <authorList>
            <person name="Lin L."/>
            <person name="Sohar I."/>
            <person name="Lackland H."/>
            <person name="Lobel P."/>
        </authorList>
    </citation>
    <scope>PROTEIN SEQUENCE OF 20-24; 196-200 AND 466-492</scope>
    <scope>FUNCTION</scope>
    <scope>CATALYTIC ACTIVITY</scope>
    <scope>ACTIVITY REGULATION</scope>
    <scope>PROTEOLYTIC CLEAVAGE</scope>
    <scope>MUTAGENESIS OF HIS-236; ASP-360; SER-475 AND ASP-517</scope>
</reference>
<reference key="9">
    <citation type="journal article" date="2003" name="J. Proteome Res.">
        <title>Proteomic analysis of early melanosomes: identification of novel melanosomal proteins.</title>
        <authorList>
            <person name="Basrur V."/>
            <person name="Yang F."/>
            <person name="Kushimoto T."/>
            <person name="Higashimoto Y."/>
            <person name="Yasumoto K."/>
            <person name="Valencia J."/>
            <person name="Muller J."/>
            <person name="Vieira W.D."/>
            <person name="Watabe H."/>
            <person name="Shabanowitz J."/>
            <person name="Hearing V.J."/>
            <person name="Hunt D.F."/>
            <person name="Appella E."/>
        </authorList>
    </citation>
    <scope>SUBCELLULAR LOCATION [LARGE SCALE ANALYSIS]</scope>
    <source>
        <tissue>Melanoma</tissue>
    </source>
</reference>
<reference key="10">
    <citation type="journal article" date="2003" name="Nat. Biotechnol.">
        <title>Identification and quantification of N-linked glycoproteins using hydrazide chemistry, stable isotope labeling and mass spectrometry.</title>
        <authorList>
            <person name="Zhang H."/>
            <person name="Li X.-J."/>
            <person name="Martin D.B."/>
            <person name="Aebersold R."/>
        </authorList>
    </citation>
    <scope>GLYCOSYLATION AT ASN-443</scope>
</reference>
<reference key="11">
    <citation type="journal article" date="1999" name="Hum. Mutat.">
        <title>Molecular basis of the neuronal ceroid lipofuscinoses: mutations in CLN1, CLN2, CLN3, and CLN5.</title>
        <authorList>
            <person name="Mole S.E."/>
            <person name="Mitchison H.M."/>
            <person name="Munroe P.B."/>
        </authorList>
    </citation>
    <scope>REVIEW ON VARIANTS</scope>
</reference>
<reference key="12">
    <citation type="journal article" date="2006" name="J. Proteome Res.">
        <title>Proteomic and bioinformatic characterization of the biogenesis and function of melanosomes.</title>
        <authorList>
            <person name="Chi A."/>
            <person name="Valencia J.C."/>
            <person name="Hu Z.-Z."/>
            <person name="Watabe H."/>
            <person name="Yamaguchi H."/>
            <person name="Mangini N.J."/>
            <person name="Huang H."/>
            <person name="Canfield V.A."/>
            <person name="Cheng K.C."/>
            <person name="Yang F."/>
            <person name="Abe R."/>
            <person name="Yamagishi S."/>
            <person name="Shabanowitz J."/>
            <person name="Hearing V.J."/>
            <person name="Wu C."/>
            <person name="Appella E."/>
            <person name="Hunt D.F."/>
        </authorList>
    </citation>
    <scope>SUBCELLULAR LOCATION [LARGE SCALE ANALYSIS]</scope>
    <source>
        <tissue>Melanoma</tissue>
    </source>
</reference>
<reference key="13">
    <citation type="journal article" date="2007" name="Pediatr. Res.">
        <title>Neuronal ceroid lipofuscinosis: a common pathway?</title>
        <authorList>
            <person name="Persaud-Sawin D.A."/>
            <person name="Mousallem T."/>
            <person name="Wang C."/>
            <person name="Zucker A."/>
            <person name="Kominami E."/>
            <person name="Boustany R.M."/>
        </authorList>
    </citation>
    <scope>INTERACTION WITH CLN3</scope>
</reference>
<reference key="14">
    <citation type="journal article" date="2009" name="BMC Cell Biol.">
        <title>Novel interactions of CLN5 support molecular networking between neuronal ceroid lipofuscinosis proteins.</title>
        <authorList>
            <person name="Lyly A."/>
            <person name="von Schantz C."/>
            <person name="Heine C."/>
            <person name="Schmiedt M.L."/>
            <person name="Sipilae T."/>
            <person name="Jalanko A."/>
            <person name="Kyttaelae A."/>
        </authorList>
    </citation>
    <scope>INTERACTION WITH CLN5</scope>
    <scope>SUBCELLULAR LOCATION</scope>
</reference>
<reference key="15">
    <citation type="journal article" date="2009" name="J. Proteome Res.">
        <title>Glycoproteomics analysis of human liver tissue by combination of multiple enzyme digestion and hydrazide chemistry.</title>
        <authorList>
            <person name="Chen R."/>
            <person name="Jiang X."/>
            <person name="Sun D."/>
            <person name="Han G."/>
            <person name="Wang F."/>
            <person name="Ye M."/>
            <person name="Wang L."/>
            <person name="Zou H."/>
        </authorList>
    </citation>
    <scope>GLYCOSYLATION [LARGE SCALE ANALYSIS] AT ASN-210; ASN-222; ASN-313 AND ASN-443</scope>
    <source>
        <tissue>Liver</tissue>
    </source>
</reference>
<reference key="16">
    <citation type="journal article" date="2011" name="BMC Syst. Biol.">
        <title>Initial characterization of the human central proteome.</title>
        <authorList>
            <person name="Burkard T.R."/>
            <person name="Planyavsky M."/>
            <person name="Kaupe I."/>
            <person name="Breitwieser F.P."/>
            <person name="Buerckstuemmer T."/>
            <person name="Bennett K.L."/>
            <person name="Superti-Furga G."/>
            <person name="Colinge J."/>
        </authorList>
    </citation>
    <scope>IDENTIFICATION BY MASS SPECTROMETRY [LARGE SCALE ANALYSIS]</scope>
</reference>
<reference key="17">
    <citation type="journal article" date="2014" name="J. Proteomics">
        <title>An enzyme assisted RP-RPLC approach for in-depth analysis of human liver phosphoproteome.</title>
        <authorList>
            <person name="Bian Y."/>
            <person name="Song C."/>
            <person name="Cheng K."/>
            <person name="Dong M."/>
            <person name="Wang F."/>
            <person name="Huang J."/>
            <person name="Sun D."/>
            <person name="Wang L."/>
            <person name="Ye M."/>
            <person name="Zou H."/>
        </authorList>
    </citation>
    <scope>IDENTIFICATION BY MASS SPECTROMETRY [LARGE SCALE ANALYSIS]</scope>
    <source>
        <tissue>Liver</tissue>
    </source>
</reference>
<reference key="18">
    <citation type="journal article" date="2015" name="Proteomics">
        <title>N-terminome analysis of the human mitochondrial proteome.</title>
        <authorList>
            <person name="Vaca Jacome A.S."/>
            <person name="Rabilloud T."/>
            <person name="Schaeffer-Reiss C."/>
            <person name="Rompais M."/>
            <person name="Ayoub D."/>
            <person name="Lane L."/>
            <person name="Bairoch A."/>
            <person name="Van Dorsselaer A."/>
            <person name="Carapito C."/>
        </authorList>
    </citation>
    <scope>CLEAVAGE OF PROPEPTIDE [LARGE SCALE ANALYSIS] AFTER GLY-195</scope>
    <scope>IDENTIFICATION BY MASS SPECTROMETRY [LARGE SCALE ANALYSIS]</scope>
</reference>
<reference key="19">
    <citation type="journal article" date="2009" name="J. Biol. Chem.">
        <title>Structure of tripeptidyl-peptidase I provides insight into the molecular basis of late infantile neuronal ceroid lipofuscinosis.</title>
        <authorList>
            <person name="Pal A."/>
            <person name="Kraetzner R."/>
            <person name="Gruene T."/>
            <person name="Grapp M."/>
            <person name="Schreiber K."/>
            <person name="Gronborg M."/>
            <person name="Urlaub H."/>
            <person name="Becker S."/>
            <person name="Asif A.R."/>
            <person name="Gartner J."/>
            <person name="Sheldrick G.M."/>
            <person name="Steinfeld R."/>
        </authorList>
    </citation>
    <scope>X-RAY CRYSTALLOGRAPHY (2.35 ANGSTROMS)</scope>
    <scope>FUNCTION</scope>
    <scope>CATALYTIC ACTIVITY</scope>
    <scope>PROTEOLYTIC CLEAVAGE</scope>
    <scope>ACTIVE SITE</scope>
    <scope>CALCIUM-BINDING SITES</scope>
    <scope>DISULFIDE BONDS</scope>
    <scope>GLYCOSYLATION AT ASN-210; ASN-286; ASN-313 AND ASN-443</scope>
</reference>
<reference key="20">
    <citation type="journal article" date="2009" name="J. Biol. Chem.">
        <title>Crystal structure and autoactivation pathway of the precursor form of human tripeptidyl-peptidase 1, the enzyme deficient in late infantile ceroid lipofuscinosis.</title>
        <authorList>
            <person name="Guhaniyogi J."/>
            <person name="Sohar I."/>
            <person name="Das K."/>
            <person name="Stock A.M."/>
            <person name="Lobel P."/>
        </authorList>
    </citation>
    <scope>X-RAY CRYSTALLOGRAPHY (1.85 ANGSTROMS) OF 20-563</scope>
    <scope>FUNCTION</scope>
    <scope>CATALYTIC ACTIVITY</scope>
    <scope>ACTIVE SITE</scope>
    <scope>DISULFIDE BONDS</scope>
    <scope>CALCIUM-BINDING SITES</scope>
    <scope>SUBUNIT</scope>
    <scope>AUTOPROTEOLYTIC CLEAVAGE</scope>
    <scope>GLYCOSYLATION AT ASN-210; ASN-286; ASN-313 AND ASN-443</scope>
</reference>
<reference key="21">
    <citation type="journal article" date="1999" name="Am. J. Hum. Genet.">
        <title>Mutational analysis of the defective protease in classic late-infantile neuronal ceroid lipofuscinosis, a neurodegenerative lysosomal storage disorder.</title>
        <authorList>
            <person name="Sleat D.E."/>
            <person name="Gin R.M."/>
            <person name="Sohar I."/>
            <person name="Wisniewski K."/>
            <person name="Sklower-Brooks S."/>
            <person name="Pullarkat R.K."/>
            <person name="Palmer D.N."/>
            <person name="Lerner T.J."/>
            <person name="Boustany R.-M.N."/>
            <person name="Uldall P."/>
            <person name="Siakotos A.N."/>
            <person name="Donnelly R.J."/>
            <person name="Lobel P."/>
        </authorList>
    </citation>
    <scope>VARIANTS CLN2 ARG-77; ASN-287; LYS-343; ARG-365; TYR-365; ASP-385; GLU-389; HIS-422; HIS-447; GLU-454 AND LEU-475</scope>
    <scope>VARIANT ARG-100</scope>
</reference>
<reference key="22">
    <citation type="journal article" date="2000" name="Ann. Neurol.">
        <title>Prenatal testing for late infantile neuronal ceroid lipofuscinosis.</title>
        <authorList>
            <person name="Berry-Kravis E."/>
            <person name="Sleat D.E."/>
            <person name="Sohar I."/>
            <person name="Meyer P."/>
            <person name="Donnelly R."/>
            <person name="Lobel P."/>
        </authorList>
    </citation>
    <scope>VARIANT CLN2 CYS-206</scope>
</reference>
<reference key="23">
    <citation type="journal article" date="2000" name="Genet. Med.">
        <title>Heterogeneity of late-infantile neuronal ceroid lipofuscinosis.</title>
        <authorList>
            <person name="Zhong N."/>
            <person name="Moroziewicz D.N."/>
            <person name="Ju W."/>
            <person name="Jurkiewicz A."/>
            <person name="Johnston L."/>
            <person name="Wisniewski K.E."/>
            <person name="Brown W.T."/>
        </authorList>
    </citation>
    <scope>VARIANTS CLN2 GLN-127; VAL-284; ASN-428 AND ARG-473</scope>
</reference>
<reference key="24">
    <citation type="journal article" date="2001" name="Am. J. Med. Genet.">
        <title>Two novel CLN2 gene mutations in a Chinese patient with classical late-infantile neuronal ceroid lipofuscinosis.</title>
        <authorList>
            <person name="Lam C.W."/>
            <person name="Poon P.M."/>
            <person name="Tong S.F."/>
            <person name="Ko C.H."/>
        </authorList>
    </citation>
    <scope>VARIANT CLN2 ARG-473</scope>
</reference>
<reference key="25">
    <citation type="journal article" date="2001" name="Eur. J. Paediatr. Neurol.">
        <title>New mutations in the neuronal ceroid lipofuscinosis genes.</title>
        <authorList>
            <person name="Mole S.E."/>
            <person name="Zhong N.A."/>
            <person name="Sarpong A."/>
            <person name="Logan W.P."/>
            <person name="Hofmann S."/>
            <person name="Yi W."/>
            <person name="Franken P.F."/>
            <person name="van Diggelen O.P."/>
            <person name="Breuning M.H."/>
            <person name="Moroziewicz D."/>
            <person name="Ju W."/>
            <person name="Salonen T."/>
            <person name="Holmberg V."/>
            <person name="Jaervelae I."/>
            <person name="Taschner P.E.M."/>
        </authorList>
    </citation>
    <scope>VARIANT CLN2 LEU-202</scope>
</reference>
<reference key="26">
    <citation type="journal article" date="2001" name="Hum. Mutat.">
        <title>Expression and analysis of CLN2 variants in CHO cells: Q100R represents a polymorphism, and G389E and R447H represent loss-of-function mutations.</title>
        <authorList>
            <person name="Lin L."/>
            <person name="Lobel P."/>
        </authorList>
    </citation>
    <scope>CHARACTERIZATION OF VARIANTS ARG-100; GLU-389 AND HIS-447</scope>
</reference>
<reference key="27">
    <citation type="journal article" date="2002" name="Am. J. Med. Genet.">
        <title>Late infantile neuronal ceroid lipofuscinosis: quantitative description of the clinical course in patients with CLN2 mutations.</title>
        <authorList>
            <person name="Steinfeld R."/>
            <person name="Heim P."/>
            <person name="von Gregory H."/>
            <person name="Meyer K."/>
            <person name="Ullrich K."/>
            <person name="Goebel H.H."/>
            <person name="Kohlschutter A."/>
        </authorList>
    </citation>
    <scope>VARIANTS CLN2 GLN-127; SER-286 AND PRO-353</scope>
</reference>
<reference key="28">
    <citation type="journal article" date="2002" name="J. Med. Genet.">
        <title>Identification of novel CLN2 mutations shows Canadian specific NCL2 alleles.</title>
        <authorList>
            <person name="Ju W."/>
            <person name="Zhong R."/>
            <person name="Moore S."/>
            <person name="Moroziewicz D."/>
            <person name="Currie J.R."/>
            <person name="Parfrey P."/>
            <person name="Brown W.T."/>
            <person name="Zhong N."/>
        </authorList>
    </citation>
    <scope>VARIANTS CLN2 MET-277; PRO-278; VAL-284 AND CYS-481</scope>
</reference>
<reference key="29">
    <citation type="journal article" date="2002" name="Vopr. Med. Khim.">
        <title>Tripeptidyl peptidase 1 deficiency in neuronal ceroid lipofuscinosis. A novel mutation.</title>
        <authorList>
            <person name="Bukina A.M."/>
            <person name="Tsvetkova I.V."/>
            <person name="Semiachkina A.N."/>
            <person name="Il'ina E.S."/>
        </authorList>
    </citation>
    <scope>VARIANT CLN2 HIS-206</scope>
</reference>
<reference key="30">
    <citation type="journal article" date="2004" name="Glycobiology">
        <title>Mutation of the glycosylated asparagine residue 286 in human CLN2 protein results in loss of enzymatic activity.</title>
        <authorList>
            <person name="Tsiakas K."/>
            <person name="Steinfeld R."/>
            <person name="Storch S."/>
            <person name="Ezaki J."/>
            <person name="Lukacs Z."/>
            <person name="Kominami E."/>
            <person name="Kohlschuetter A."/>
            <person name="Ullrich K."/>
            <person name="Braulke T."/>
        </authorList>
    </citation>
    <scope>CHARACTERIZATION OF VARIANT CLN2 SER-286</scope>
</reference>
<reference key="31">
    <citation type="journal article" date="2009" name="Brain">
        <title>Mutations in CLN7/MFSD8 are a common cause of variant late-infantile neuronal ceroid lipofuscinosis.</title>
        <authorList>
            <person name="Kousi M."/>
            <person name="Siintola E."/>
            <person name="Dvorakova L."/>
            <person name="Vlaskova H."/>
            <person name="Turnbull J."/>
            <person name="Topcu M."/>
            <person name="Yuksel D."/>
            <person name="Gokben S."/>
            <person name="Minassian B.A."/>
            <person name="Elleder M."/>
            <person name="Mole S.E."/>
            <person name="Lehesjoki A.-E."/>
        </authorList>
    </citation>
    <scope>VARIANT CLN2 ARG-482</scope>
</reference>
<reference key="32">
    <citation type="journal article" date="2010" name="Hum. Mutat.">
        <title>Functional consequences and rescue potential of pathogenic missense mutations in tripeptidyl peptidase I.</title>
        <authorList>
            <person name="Walus M."/>
            <person name="Kida E."/>
            <person name="Golabek A.A."/>
        </authorList>
    </citation>
    <scope>VARIANT CLN2 SER-544</scope>
    <scope>CHARACTERIZATION OF VARIANTS CLN2 ARG-77; GLN-127; LEU-202; CYS-206; MET-277; VAL-284; SER-286; ASN-287; LYS-343; ARG-365; HIS-422; HIS-447; LEU-475 AND SER-544</scope>
</reference>
<reference key="33">
    <citation type="journal article" date="2012" name="Epilepsia">
        <title>Targeted next generation sequencing as a diagnostic tool in epileptic disorders.</title>
        <authorList>
            <person name="Lemke J.R."/>
            <person name="Riesch E."/>
            <person name="Scheurenbrand T."/>
            <person name="Schubach M."/>
            <person name="Wilhelm C."/>
            <person name="Steiner I."/>
            <person name="Hansen J."/>
            <person name="Courage C."/>
            <person name="Gallati S."/>
            <person name="Buerki S."/>
            <person name="Strozzi S."/>
            <person name="Simonetti B.G."/>
            <person name="Grunt S."/>
            <person name="Steinlin M."/>
            <person name="Alber M."/>
            <person name="Wolff M."/>
            <person name="Klopstock T."/>
            <person name="Prott E.C."/>
            <person name="Lorenz R."/>
            <person name="Spaich C."/>
            <person name="Rona S."/>
            <person name="Lakshminarasimhan M."/>
            <person name="Kroell J."/>
            <person name="Dorn T."/>
            <person name="Kraemer G."/>
            <person name="Synofzik M."/>
            <person name="Becker F."/>
            <person name="Weber Y.G."/>
            <person name="Lerche H."/>
            <person name="Boehm D."/>
            <person name="Biskup S."/>
        </authorList>
    </citation>
    <scope>VARIANTS CLN2 ARG-278 AND HIS-422</scope>
</reference>
<reference key="34">
    <citation type="journal article" date="2012" name="Hum. Mutat.">
        <title>Update of the mutation spectrum and clinical correlations of over 360 mutations in eight genes that underlie the neuronal ceroid lipofuscinoses.</title>
        <authorList>
            <person name="Kousi M."/>
            <person name="Lehesjoki A.E."/>
            <person name="Mole S.E."/>
        </authorList>
    </citation>
    <scope>VARIANTS CLN2 THR-62; HIS-209; GLN-266; GLN-339; ARG-382; VAL-448; CYS-501; TYR-504 AND ARG-548</scope>
</reference>
<reference key="35">
    <citation type="journal article" date="2013" name="Hum. Mutat.">
        <title>Autosomal recessive spinocerebellar ataxia 7 (SCAR7) is caused by variants in TPP1, the gene involved in classic late-infantile neuronal ceroid lipofuscinosis 2 disease (CLN2 disease).</title>
        <authorList>
            <person name="Sun Y."/>
            <person name="Almomani R."/>
            <person name="Breedveld G.J."/>
            <person name="Santen G.W."/>
            <person name="Aten E."/>
            <person name="Lefeber D.J."/>
            <person name="Hoff J.I."/>
            <person name="Brusse E."/>
            <person name="Verheijen F.W."/>
            <person name="Verdijk R.M."/>
            <person name="Kriek M."/>
            <person name="Oostra B."/>
            <person name="Breuning M.H."/>
            <person name="Losekoot M."/>
            <person name="den Dunnen J.T."/>
            <person name="van de Warrenburg B.P."/>
            <person name="Maat-Kievit A.J."/>
        </authorList>
    </citation>
    <scope>VARIANT SCAR7 GLY-466</scope>
</reference>
<proteinExistence type="evidence at protein level"/>
<dbReference type="EC" id="3.4.14.9" evidence="3 15 16"/>
<dbReference type="EMBL" id="AF017456">
    <property type="protein sequence ID" value="AAB80725.1"/>
    <property type="molecule type" value="mRNA"/>
</dbReference>
<dbReference type="EMBL" id="AF039704">
    <property type="protein sequence ID" value="AAC98480.1"/>
    <property type="molecule type" value="Genomic_DNA"/>
</dbReference>
<dbReference type="EMBL" id="AF491290">
    <property type="protein sequence ID" value="AAM08412.1"/>
    <property type="status" value="ALT_SEQ"/>
    <property type="molecule type" value="mRNA"/>
</dbReference>
<dbReference type="EMBL" id="AY268890">
    <property type="protein sequence ID" value="AAQ72732.1"/>
    <property type="molecule type" value="mRNA"/>
</dbReference>
<dbReference type="EMBL" id="AY358502">
    <property type="protein sequence ID" value="AAQ88866.1"/>
    <property type="status" value="ALT_FRAME"/>
    <property type="molecule type" value="mRNA"/>
</dbReference>
<dbReference type="EMBL" id="AK222499">
    <property type="protein sequence ID" value="BAD96219.1"/>
    <property type="molecule type" value="mRNA"/>
</dbReference>
<dbReference type="EMBL" id="BC014863">
    <property type="protein sequence ID" value="AAH14863.1"/>
    <property type="molecule type" value="mRNA"/>
</dbReference>
<dbReference type="CCDS" id="CCDS7770.1">
    <molecule id="O14773-1"/>
</dbReference>
<dbReference type="RefSeq" id="NP_000382.3">
    <molecule id="O14773-1"/>
    <property type="nucleotide sequence ID" value="NM_000391.3"/>
</dbReference>
<dbReference type="PDB" id="3EDY">
    <property type="method" value="X-ray"/>
    <property type="resolution" value="1.85 A"/>
    <property type="chains" value="A=20-563"/>
</dbReference>
<dbReference type="PDB" id="3EE6">
    <property type="method" value="X-ray"/>
    <property type="resolution" value="2.35 A"/>
    <property type="chains" value="A/B=1-563"/>
</dbReference>
<dbReference type="PDBsum" id="3EDY"/>
<dbReference type="PDBsum" id="3EE6"/>
<dbReference type="SMR" id="O14773"/>
<dbReference type="BioGRID" id="107611">
    <property type="interactions" value="174"/>
</dbReference>
<dbReference type="DIP" id="DIP-47434N"/>
<dbReference type="FunCoup" id="O14773">
    <property type="interactions" value="753"/>
</dbReference>
<dbReference type="IntAct" id="O14773">
    <property type="interactions" value="75"/>
</dbReference>
<dbReference type="MINT" id="O14773"/>
<dbReference type="STRING" id="9606.ENSP00000299427"/>
<dbReference type="MEROPS" id="S53.003"/>
<dbReference type="GlyConnect" id="1858">
    <property type="glycosylation" value="8 N-Linked glycans (3 sites)"/>
</dbReference>
<dbReference type="GlyCosmos" id="O14773">
    <property type="glycosylation" value="5 sites, 9 glycans"/>
</dbReference>
<dbReference type="GlyGen" id="O14773">
    <property type="glycosylation" value="9 sites, 23 N-linked glycans (5 sites), 2 O-linked glycans (2 sites)"/>
</dbReference>
<dbReference type="iPTMnet" id="O14773"/>
<dbReference type="PhosphoSitePlus" id="O14773"/>
<dbReference type="SwissPalm" id="O14773"/>
<dbReference type="BioMuta" id="TPP1"/>
<dbReference type="jPOST" id="O14773"/>
<dbReference type="MassIVE" id="O14773"/>
<dbReference type="PaxDb" id="9606-ENSP00000299427"/>
<dbReference type="PeptideAtlas" id="O14773"/>
<dbReference type="ProteomicsDB" id="48224">
    <molecule id="O14773-1"/>
</dbReference>
<dbReference type="ProteomicsDB" id="48225">
    <molecule id="O14773-2"/>
</dbReference>
<dbReference type="Pumba" id="O14773"/>
<dbReference type="Antibodypedia" id="23932">
    <property type="antibodies" value="423 antibodies from 38 providers"/>
</dbReference>
<dbReference type="DNASU" id="1200"/>
<dbReference type="Ensembl" id="ENST00000299427.12">
    <molecule id="O14773-1"/>
    <property type="protein sequence ID" value="ENSP00000299427.6"/>
    <property type="gene ID" value="ENSG00000166340.18"/>
</dbReference>
<dbReference type="Ensembl" id="ENST00000533371.6">
    <molecule id="O14773-2"/>
    <property type="protein sequence ID" value="ENSP00000437066.1"/>
    <property type="gene ID" value="ENSG00000166340.18"/>
</dbReference>
<dbReference type="Ensembl" id="ENST00000642892.1">
    <molecule id="O14773-2"/>
    <property type="protein sequence ID" value="ENSP00000494165.1"/>
    <property type="gene ID" value="ENSG00000166340.18"/>
</dbReference>
<dbReference type="Ensembl" id="ENST00000645620.1">
    <molecule id="O14773-2"/>
    <property type="protein sequence ID" value="ENSP00000493657.1"/>
    <property type="gene ID" value="ENSG00000166340.18"/>
</dbReference>
<dbReference type="Ensembl" id="ENST00000647152.1">
    <molecule id="O14773-2"/>
    <property type="protein sequence ID" value="ENSP00000495893.1"/>
    <property type="gene ID" value="ENSG00000166340.18"/>
</dbReference>
<dbReference type="GeneID" id="1200"/>
<dbReference type="KEGG" id="hsa:1200"/>
<dbReference type="MANE-Select" id="ENST00000299427.12">
    <property type="protein sequence ID" value="ENSP00000299427.6"/>
    <property type="RefSeq nucleotide sequence ID" value="NM_000391.4"/>
    <property type="RefSeq protein sequence ID" value="NP_000382.3"/>
</dbReference>
<dbReference type="UCSC" id="uc001mek.2">
    <molecule id="O14773-1"/>
    <property type="organism name" value="human"/>
</dbReference>
<dbReference type="AGR" id="HGNC:2073"/>
<dbReference type="CTD" id="1200"/>
<dbReference type="DisGeNET" id="1200"/>
<dbReference type="GeneCards" id="TPP1"/>
<dbReference type="HGNC" id="HGNC:2073">
    <property type="gene designation" value="TPP1"/>
</dbReference>
<dbReference type="HPA" id="ENSG00000166340">
    <property type="expression patterns" value="Low tissue specificity"/>
</dbReference>
<dbReference type="MalaCards" id="TPP1"/>
<dbReference type="MIM" id="204500">
    <property type="type" value="phenotype"/>
</dbReference>
<dbReference type="MIM" id="607998">
    <property type="type" value="gene"/>
</dbReference>
<dbReference type="MIM" id="609270">
    <property type="type" value="phenotype"/>
</dbReference>
<dbReference type="neXtProt" id="NX_O14773"/>
<dbReference type="OpenTargets" id="ENSG00000166340"/>
<dbReference type="Orphanet" id="284324">
    <property type="disease" value="Childhood-onset autosomal recessive slowly progressive spinocerebellar ataxia"/>
</dbReference>
<dbReference type="Orphanet" id="228349">
    <property type="disease" value="CLN2 disease"/>
</dbReference>
<dbReference type="PharmGKB" id="PA26600"/>
<dbReference type="VEuPathDB" id="HostDB:ENSG00000166340"/>
<dbReference type="eggNOG" id="ENOG502QR6D">
    <property type="taxonomic scope" value="Eukaryota"/>
</dbReference>
<dbReference type="GeneTree" id="ENSGT00390000008684"/>
<dbReference type="HOGENOM" id="CLU_013783_5_1_1"/>
<dbReference type="InParanoid" id="O14773"/>
<dbReference type="OMA" id="YARSVCN"/>
<dbReference type="OrthoDB" id="2919105at2759"/>
<dbReference type="PAN-GO" id="O14773">
    <property type="GO annotations" value="4 GO annotations based on evolutionary models"/>
</dbReference>
<dbReference type="PhylomeDB" id="O14773"/>
<dbReference type="TreeFam" id="TF333497"/>
<dbReference type="BRENDA" id="3.4.14.9">
    <property type="organism ID" value="2681"/>
</dbReference>
<dbReference type="PathwayCommons" id="O14773"/>
<dbReference type="Reactome" id="R-HSA-381038">
    <property type="pathway name" value="XBP1(S) activates chaperone genes"/>
</dbReference>
<dbReference type="SABIO-RK" id="O14773"/>
<dbReference type="SignaLink" id="O14773"/>
<dbReference type="SIGNOR" id="O14773"/>
<dbReference type="BioGRID-ORCS" id="1200">
    <property type="hits" value="15 hits in 1161 CRISPR screens"/>
</dbReference>
<dbReference type="CD-CODE" id="FB4E32DD">
    <property type="entry name" value="Presynaptic clusters and postsynaptic densities"/>
</dbReference>
<dbReference type="ChiTaRS" id="TPP1">
    <property type="organism name" value="human"/>
</dbReference>
<dbReference type="EvolutionaryTrace" id="O14773"/>
<dbReference type="GeneWiki" id="Tripeptidyl_peptidase_I"/>
<dbReference type="GenomeRNAi" id="1200"/>
<dbReference type="Pharos" id="O14773">
    <property type="development level" value="Tbio"/>
</dbReference>
<dbReference type="PRO" id="PR:O14773"/>
<dbReference type="Proteomes" id="UP000005640">
    <property type="component" value="Chromosome 11"/>
</dbReference>
<dbReference type="RNAct" id="O14773">
    <property type="molecule type" value="protein"/>
</dbReference>
<dbReference type="Bgee" id="ENSG00000166340">
    <property type="expression patterns" value="Expressed in pigmented layer of retina and 205 other cell types or tissues"/>
</dbReference>
<dbReference type="ExpressionAtlas" id="O14773">
    <property type="expression patterns" value="baseline and differential"/>
</dbReference>
<dbReference type="GO" id="GO:0070062">
    <property type="term" value="C:extracellular exosome"/>
    <property type="evidence" value="ECO:0007005"/>
    <property type="project" value="UniProtKB"/>
</dbReference>
<dbReference type="GO" id="GO:0005794">
    <property type="term" value="C:Golgi apparatus"/>
    <property type="evidence" value="ECO:0000314"/>
    <property type="project" value="UniProtKB"/>
</dbReference>
<dbReference type="GO" id="GO:0043202">
    <property type="term" value="C:lysosomal lumen"/>
    <property type="evidence" value="ECO:0000304"/>
    <property type="project" value="Reactome"/>
</dbReference>
<dbReference type="GO" id="GO:0005764">
    <property type="term" value="C:lysosome"/>
    <property type="evidence" value="ECO:0000314"/>
    <property type="project" value="UniProtKB"/>
</dbReference>
<dbReference type="GO" id="GO:0042470">
    <property type="term" value="C:melanosome"/>
    <property type="evidence" value="ECO:0007669"/>
    <property type="project" value="UniProtKB-SubCell"/>
</dbReference>
<dbReference type="GO" id="GO:0045121">
    <property type="term" value="C:membrane raft"/>
    <property type="evidence" value="ECO:0000314"/>
    <property type="project" value="UniProtKB"/>
</dbReference>
<dbReference type="GO" id="GO:0055037">
    <property type="term" value="C:recycling endosome"/>
    <property type="evidence" value="ECO:0000314"/>
    <property type="project" value="UniProtKB"/>
</dbReference>
<dbReference type="GO" id="GO:0004175">
    <property type="term" value="F:endopeptidase activity"/>
    <property type="evidence" value="ECO:0000314"/>
    <property type="project" value="UniProtKB"/>
</dbReference>
<dbReference type="GO" id="GO:0035727">
    <property type="term" value="F:lysophosphatidic acid binding"/>
    <property type="evidence" value="ECO:0000314"/>
    <property type="project" value="UniProtKB"/>
</dbReference>
<dbReference type="GO" id="GO:0046872">
    <property type="term" value="F:metal ion binding"/>
    <property type="evidence" value="ECO:0007669"/>
    <property type="project" value="UniProtKB-KW"/>
</dbReference>
<dbReference type="GO" id="GO:0008233">
    <property type="term" value="F:peptidase activity"/>
    <property type="evidence" value="ECO:0000315"/>
    <property type="project" value="UniProtKB"/>
</dbReference>
<dbReference type="GO" id="GO:0042277">
    <property type="term" value="F:peptide binding"/>
    <property type="evidence" value="ECO:0000250"/>
    <property type="project" value="UniProtKB"/>
</dbReference>
<dbReference type="GO" id="GO:0004252">
    <property type="term" value="F:serine-type endopeptidase activity"/>
    <property type="evidence" value="ECO:0007669"/>
    <property type="project" value="InterPro"/>
</dbReference>
<dbReference type="GO" id="GO:0008236">
    <property type="term" value="F:serine-type peptidase activity"/>
    <property type="evidence" value="ECO:0000315"/>
    <property type="project" value="UniProtKB"/>
</dbReference>
<dbReference type="GO" id="GO:0120146">
    <property type="term" value="F:sulfatide binding"/>
    <property type="evidence" value="ECO:0000314"/>
    <property type="project" value="UniProtKB"/>
</dbReference>
<dbReference type="GO" id="GO:0008240">
    <property type="term" value="F:tripeptidyl-peptidase activity"/>
    <property type="evidence" value="ECO:0000314"/>
    <property type="project" value="UniProtKB"/>
</dbReference>
<dbReference type="GO" id="GO:0045453">
    <property type="term" value="P:bone resorption"/>
    <property type="evidence" value="ECO:0000315"/>
    <property type="project" value="UniProtKB"/>
</dbReference>
<dbReference type="GO" id="GO:0007417">
    <property type="term" value="P:central nervous system development"/>
    <property type="evidence" value="ECO:0000318"/>
    <property type="project" value="GO_Central"/>
</dbReference>
<dbReference type="GO" id="GO:0030855">
    <property type="term" value="P:epithelial cell differentiation"/>
    <property type="evidence" value="ECO:0000270"/>
    <property type="project" value="UniProtKB"/>
</dbReference>
<dbReference type="GO" id="GO:0006629">
    <property type="term" value="P:lipid metabolic process"/>
    <property type="evidence" value="ECO:0000304"/>
    <property type="project" value="ProtInc"/>
</dbReference>
<dbReference type="GO" id="GO:1905146">
    <property type="term" value="P:lysosomal protein catabolic process"/>
    <property type="evidence" value="ECO:0007669"/>
    <property type="project" value="Ensembl"/>
</dbReference>
<dbReference type="GO" id="GO:0007040">
    <property type="term" value="P:lysosome organization"/>
    <property type="evidence" value="ECO:0000250"/>
    <property type="project" value="UniProtKB"/>
</dbReference>
<dbReference type="GO" id="GO:0007399">
    <property type="term" value="P:nervous system development"/>
    <property type="evidence" value="ECO:0000315"/>
    <property type="project" value="UniProtKB"/>
</dbReference>
<dbReference type="GO" id="GO:0050885">
    <property type="term" value="P:neuromuscular process controlling balance"/>
    <property type="evidence" value="ECO:0000250"/>
    <property type="project" value="UniProtKB"/>
</dbReference>
<dbReference type="GO" id="GO:0043171">
    <property type="term" value="P:peptide catabolic process"/>
    <property type="evidence" value="ECO:0000315"/>
    <property type="project" value="UniProtKB"/>
</dbReference>
<dbReference type="GO" id="GO:0030163">
    <property type="term" value="P:protein catabolic process"/>
    <property type="evidence" value="ECO:0000303"/>
    <property type="project" value="UniProtKB"/>
</dbReference>
<dbReference type="GO" id="GO:0070198">
    <property type="term" value="P:protein localization to chromosome, telomeric region"/>
    <property type="evidence" value="ECO:0000315"/>
    <property type="project" value="CACAO"/>
</dbReference>
<dbReference type="GO" id="GO:0006508">
    <property type="term" value="P:proteolysis"/>
    <property type="evidence" value="ECO:0000315"/>
    <property type="project" value="UniProtKB"/>
</dbReference>
<dbReference type="CDD" id="cd04056">
    <property type="entry name" value="Peptidases_S53"/>
    <property type="match status" value="1"/>
</dbReference>
<dbReference type="CDD" id="cd11377">
    <property type="entry name" value="Pro-peptidase_S53"/>
    <property type="match status" value="1"/>
</dbReference>
<dbReference type="FunFam" id="3.40.50.200:FF:000012">
    <property type="entry name" value="Tripeptidyl-peptidase 1 preproprotein"/>
    <property type="match status" value="1"/>
</dbReference>
<dbReference type="Gene3D" id="3.40.50.200">
    <property type="entry name" value="Peptidase S8/S53 domain"/>
    <property type="match status" value="1"/>
</dbReference>
<dbReference type="InterPro" id="IPR000209">
    <property type="entry name" value="Peptidase_S8/S53_dom"/>
</dbReference>
<dbReference type="InterPro" id="IPR036852">
    <property type="entry name" value="Peptidase_S8/S53_dom_sf"/>
</dbReference>
<dbReference type="InterPro" id="IPR015366">
    <property type="entry name" value="S53_propep"/>
</dbReference>
<dbReference type="InterPro" id="IPR030400">
    <property type="entry name" value="Sedolisin_dom"/>
</dbReference>
<dbReference type="InterPro" id="IPR050819">
    <property type="entry name" value="Tripeptidyl-peptidase_I"/>
</dbReference>
<dbReference type="PANTHER" id="PTHR14218">
    <property type="entry name" value="PROTEASE S8 TRIPEPTIDYL PEPTIDASE I CLN2"/>
    <property type="match status" value="1"/>
</dbReference>
<dbReference type="PANTHER" id="PTHR14218:SF15">
    <property type="entry name" value="TRIPEPTIDYL-PEPTIDASE 1"/>
    <property type="match status" value="1"/>
</dbReference>
<dbReference type="Pfam" id="PF00082">
    <property type="entry name" value="Peptidase_S8"/>
    <property type="match status" value="1"/>
</dbReference>
<dbReference type="Pfam" id="PF09286">
    <property type="entry name" value="Pro-kuma_activ"/>
    <property type="match status" value="1"/>
</dbReference>
<dbReference type="SMART" id="SM00944">
    <property type="entry name" value="Pro-kuma_activ"/>
    <property type="match status" value="1"/>
</dbReference>
<dbReference type="SUPFAM" id="SSF54897">
    <property type="entry name" value="Protease propeptides/inhibitors"/>
    <property type="match status" value="1"/>
</dbReference>
<dbReference type="SUPFAM" id="SSF52743">
    <property type="entry name" value="Subtilisin-like"/>
    <property type="match status" value="1"/>
</dbReference>
<dbReference type="PROSITE" id="PS51695">
    <property type="entry name" value="SEDOLISIN"/>
    <property type="match status" value="1"/>
</dbReference>